<keyword id="KW-0963">Cytoplasm</keyword>
<keyword id="KW-0560">Oxidoreductase</keyword>
<reference key="1">
    <citation type="journal article" date="2003" name="Genome Res.">
        <title>Comparative genome analysis of Vibrio vulnificus, a marine pathogen.</title>
        <authorList>
            <person name="Chen C.-Y."/>
            <person name="Wu K.-M."/>
            <person name="Chang Y.-C."/>
            <person name="Chang C.-H."/>
            <person name="Tsai H.-C."/>
            <person name="Liao T.-L."/>
            <person name="Liu Y.-M."/>
            <person name="Chen H.-J."/>
            <person name="Shen A.B.-T."/>
            <person name="Li J.-C."/>
            <person name="Su T.-L."/>
            <person name="Shao C.-P."/>
            <person name="Lee C.-T."/>
            <person name="Hor L.-I."/>
            <person name="Tsai S.-F."/>
        </authorList>
    </citation>
    <scope>NUCLEOTIDE SEQUENCE [LARGE SCALE GENOMIC DNA]</scope>
    <source>
        <strain>YJ016</strain>
    </source>
</reference>
<organism>
    <name type="scientific">Vibrio vulnificus (strain YJ016)</name>
    <dbReference type="NCBI Taxonomy" id="196600"/>
    <lineage>
        <taxon>Bacteria</taxon>
        <taxon>Pseudomonadati</taxon>
        <taxon>Pseudomonadota</taxon>
        <taxon>Gammaproteobacteria</taxon>
        <taxon>Vibrionales</taxon>
        <taxon>Vibrionaceae</taxon>
        <taxon>Vibrio</taxon>
    </lineage>
</organism>
<protein>
    <recommendedName>
        <fullName evidence="1">Phosphoadenosine 5'-phosphosulfate reductase</fullName>
        <shortName evidence="1">PAPS reductase</shortName>
        <ecNumber evidence="1">1.8.4.8</ecNumber>
    </recommendedName>
    <alternativeName>
        <fullName evidence="1">3'-phosphoadenylylsulfate reductase</fullName>
    </alternativeName>
    <alternativeName>
        <fullName evidence="1">PAPS reductase, thioredoxin dependent</fullName>
    </alternativeName>
    <alternativeName>
        <fullName evidence="1">PAPS sulfotransferase</fullName>
    </alternativeName>
    <alternativeName>
        <fullName evidence="1">PAdoPS reductase</fullName>
    </alternativeName>
</protein>
<dbReference type="EC" id="1.8.4.8" evidence="1"/>
<dbReference type="EMBL" id="BA000037">
    <property type="protein sequence ID" value="BAC95729.1"/>
    <property type="status" value="ALT_INIT"/>
    <property type="molecule type" value="Genomic_DNA"/>
</dbReference>
<dbReference type="RefSeq" id="WP_043877333.1">
    <property type="nucleotide sequence ID" value="NC_005139.1"/>
</dbReference>
<dbReference type="SMR" id="Q7MHA7"/>
<dbReference type="STRING" id="672.VV93_v1c26950"/>
<dbReference type="KEGG" id="vvy:VV2965"/>
<dbReference type="PATRIC" id="fig|196600.6.peg.2944"/>
<dbReference type="eggNOG" id="COG0175">
    <property type="taxonomic scope" value="Bacteria"/>
</dbReference>
<dbReference type="HOGENOM" id="CLU_044089_3_0_6"/>
<dbReference type="UniPathway" id="UPA00140">
    <property type="reaction ID" value="UER00206"/>
</dbReference>
<dbReference type="Proteomes" id="UP000002675">
    <property type="component" value="Chromosome I"/>
</dbReference>
<dbReference type="GO" id="GO:0005737">
    <property type="term" value="C:cytoplasm"/>
    <property type="evidence" value="ECO:0007669"/>
    <property type="project" value="UniProtKB-SubCell"/>
</dbReference>
<dbReference type="GO" id="GO:0004604">
    <property type="term" value="F:phosphoadenylyl-sulfate reductase (thioredoxin) activity"/>
    <property type="evidence" value="ECO:0007669"/>
    <property type="project" value="UniProtKB-UniRule"/>
</dbReference>
<dbReference type="GO" id="GO:0070814">
    <property type="term" value="P:hydrogen sulfide biosynthetic process"/>
    <property type="evidence" value="ECO:0007669"/>
    <property type="project" value="UniProtKB-UniRule"/>
</dbReference>
<dbReference type="GO" id="GO:0019379">
    <property type="term" value="P:sulfate assimilation, phosphoadenylyl sulfate reduction by phosphoadenylyl-sulfate reductase (thioredoxin)"/>
    <property type="evidence" value="ECO:0007669"/>
    <property type="project" value="UniProtKB-UniRule"/>
</dbReference>
<dbReference type="CDD" id="cd23945">
    <property type="entry name" value="PAPS_reductase"/>
    <property type="match status" value="1"/>
</dbReference>
<dbReference type="FunFam" id="3.40.50.620:FF:000043">
    <property type="entry name" value="Phosphoadenosine phosphosulfate reductase"/>
    <property type="match status" value="1"/>
</dbReference>
<dbReference type="Gene3D" id="3.40.50.620">
    <property type="entry name" value="HUPs"/>
    <property type="match status" value="1"/>
</dbReference>
<dbReference type="HAMAP" id="MF_00063">
    <property type="entry name" value="CysH"/>
    <property type="match status" value="1"/>
</dbReference>
<dbReference type="InterPro" id="IPR004511">
    <property type="entry name" value="PAPS/APS_Rdtase"/>
</dbReference>
<dbReference type="InterPro" id="IPR002500">
    <property type="entry name" value="PAPS_reduct_dom"/>
</dbReference>
<dbReference type="InterPro" id="IPR011800">
    <property type="entry name" value="PAPS_reductase_CysH"/>
</dbReference>
<dbReference type="InterPro" id="IPR014729">
    <property type="entry name" value="Rossmann-like_a/b/a_fold"/>
</dbReference>
<dbReference type="NCBIfam" id="TIGR00434">
    <property type="entry name" value="cysH"/>
    <property type="match status" value="1"/>
</dbReference>
<dbReference type="NCBIfam" id="TIGR02057">
    <property type="entry name" value="PAPS_reductase"/>
    <property type="match status" value="1"/>
</dbReference>
<dbReference type="NCBIfam" id="NF002537">
    <property type="entry name" value="PRK02090.1"/>
    <property type="match status" value="1"/>
</dbReference>
<dbReference type="PANTHER" id="PTHR46509">
    <property type="entry name" value="PHOSPHOADENOSINE PHOSPHOSULFATE REDUCTASE"/>
    <property type="match status" value="1"/>
</dbReference>
<dbReference type="PANTHER" id="PTHR46509:SF1">
    <property type="entry name" value="PHOSPHOADENOSINE PHOSPHOSULFATE REDUCTASE"/>
    <property type="match status" value="1"/>
</dbReference>
<dbReference type="Pfam" id="PF01507">
    <property type="entry name" value="PAPS_reduct"/>
    <property type="match status" value="1"/>
</dbReference>
<dbReference type="PIRSF" id="PIRSF000857">
    <property type="entry name" value="PAPS_reductase"/>
    <property type="match status" value="1"/>
</dbReference>
<dbReference type="SUPFAM" id="SSF52402">
    <property type="entry name" value="Adenine nucleotide alpha hydrolases-like"/>
    <property type="match status" value="1"/>
</dbReference>
<proteinExistence type="inferred from homology"/>
<evidence type="ECO:0000255" key="1">
    <source>
        <dbReference type="HAMAP-Rule" id="MF_00063"/>
    </source>
</evidence>
<evidence type="ECO:0000305" key="2"/>
<sequence length="258" mass="29462">MLDSVASTLQLSELLSLTKAEQSIRLAEINVELEMLSAQERVAWALQNLEGAHAVSSSFGIQAAVMLHLLSKQQADIPVILTDTGYLFPETYQFIDELTKSLNLNLKVYRANESANWQEARYGKLWEQGIEGIEKYNKLNKVEPMRRALNELNVKTWFSGLRREQSQSRAGLPILSIQNGVFKFLPVVDWSNKDVHYYLKEHGLSYHPLWEQGYLSVGDTHTTQKWEPGMSEEETRFFGLKRECGLHEEDNEQDGSGI</sequence>
<name>CYSH_VIBVY</name>
<accession>Q7MHA7</accession>
<feature type="chain" id="PRO_0000100655" description="Phosphoadenosine 5'-phosphosulfate reductase">
    <location>
        <begin position="1"/>
        <end position="258"/>
    </location>
</feature>
<feature type="active site" description="Nucleophile; cysteine thiosulfonate intermediate" evidence="1">
    <location>
        <position position="244"/>
    </location>
</feature>
<gene>
    <name evidence="1" type="primary">cysH</name>
    <name type="ordered locus">VV2965</name>
</gene>
<comment type="function">
    <text evidence="1">Catalyzes the formation of sulfite from phosphoadenosine 5'-phosphosulfate (PAPS) using thioredoxin as an electron donor.</text>
</comment>
<comment type="catalytic activity">
    <reaction evidence="1">
        <text>[thioredoxin]-disulfide + sulfite + adenosine 3',5'-bisphosphate + 2 H(+) = [thioredoxin]-dithiol + 3'-phosphoadenylyl sulfate</text>
        <dbReference type="Rhea" id="RHEA:11724"/>
        <dbReference type="Rhea" id="RHEA-COMP:10698"/>
        <dbReference type="Rhea" id="RHEA-COMP:10700"/>
        <dbReference type="ChEBI" id="CHEBI:15378"/>
        <dbReference type="ChEBI" id="CHEBI:17359"/>
        <dbReference type="ChEBI" id="CHEBI:29950"/>
        <dbReference type="ChEBI" id="CHEBI:50058"/>
        <dbReference type="ChEBI" id="CHEBI:58339"/>
        <dbReference type="ChEBI" id="CHEBI:58343"/>
        <dbReference type="EC" id="1.8.4.8"/>
    </reaction>
</comment>
<comment type="pathway">
    <text evidence="1">Sulfur metabolism; hydrogen sulfide biosynthesis; sulfite from sulfate: step 3/3.</text>
</comment>
<comment type="subcellular location">
    <subcellularLocation>
        <location evidence="1">Cytoplasm</location>
    </subcellularLocation>
</comment>
<comment type="similarity">
    <text evidence="1">Belongs to the PAPS reductase family. CysH subfamily.</text>
</comment>
<comment type="sequence caution" evidence="2">
    <conflict type="erroneous initiation">
        <sequence resource="EMBL-CDS" id="BAC95729"/>
    </conflict>
</comment>